<name>RHAS_SHIBS</name>
<organism>
    <name type="scientific">Shigella boydii serotype 4 (strain Sb227)</name>
    <dbReference type="NCBI Taxonomy" id="300268"/>
    <lineage>
        <taxon>Bacteria</taxon>
        <taxon>Pseudomonadati</taxon>
        <taxon>Pseudomonadota</taxon>
        <taxon>Gammaproteobacteria</taxon>
        <taxon>Enterobacterales</taxon>
        <taxon>Enterobacteriaceae</taxon>
        <taxon>Shigella</taxon>
    </lineage>
</organism>
<feature type="chain" id="PRO_1000068707" description="HTH-type transcriptional activator RhaS">
    <location>
        <begin position="1"/>
        <end position="278"/>
    </location>
</feature>
<feature type="domain" description="HTH araC/xylS-type" evidence="1">
    <location>
        <begin position="174"/>
        <end position="272"/>
    </location>
</feature>
<feature type="DNA-binding region" description="H-T-H motif" evidence="1">
    <location>
        <begin position="191"/>
        <end position="212"/>
    </location>
</feature>
<feature type="DNA-binding region" description="H-T-H motif" evidence="1">
    <location>
        <begin position="239"/>
        <end position="262"/>
    </location>
</feature>
<feature type="site" description="Interaction with sigma-70" evidence="1">
    <location>
        <position position="241"/>
    </location>
</feature>
<feature type="site" description="Interaction with sigma-70" evidence="1">
    <location>
        <position position="250"/>
    </location>
</feature>
<dbReference type="EMBL" id="CP000036">
    <property type="protein sequence ID" value="ABB68374.1"/>
    <property type="molecule type" value="Genomic_DNA"/>
</dbReference>
<dbReference type="RefSeq" id="WP_000217137.1">
    <property type="nucleotide sequence ID" value="NC_007613.1"/>
</dbReference>
<dbReference type="SMR" id="Q31U84"/>
<dbReference type="GeneID" id="75204579"/>
<dbReference type="KEGG" id="sbo:SBO_3923"/>
<dbReference type="HOGENOM" id="CLU_000445_88_5_6"/>
<dbReference type="Proteomes" id="UP000007067">
    <property type="component" value="Chromosome"/>
</dbReference>
<dbReference type="GO" id="GO:0005737">
    <property type="term" value="C:cytoplasm"/>
    <property type="evidence" value="ECO:0007669"/>
    <property type="project" value="UniProtKB-SubCell"/>
</dbReference>
<dbReference type="GO" id="GO:0003700">
    <property type="term" value="F:DNA-binding transcription factor activity"/>
    <property type="evidence" value="ECO:0007669"/>
    <property type="project" value="UniProtKB-UniRule"/>
</dbReference>
<dbReference type="GO" id="GO:0043565">
    <property type="term" value="F:sequence-specific DNA binding"/>
    <property type="evidence" value="ECO:0007669"/>
    <property type="project" value="InterPro"/>
</dbReference>
<dbReference type="GO" id="GO:0045893">
    <property type="term" value="P:positive regulation of DNA-templated transcription"/>
    <property type="evidence" value="ECO:0007669"/>
    <property type="project" value="UniProtKB-UniRule"/>
</dbReference>
<dbReference type="GO" id="GO:0019299">
    <property type="term" value="P:rhamnose metabolic process"/>
    <property type="evidence" value="ECO:0007669"/>
    <property type="project" value="UniProtKB-UniRule"/>
</dbReference>
<dbReference type="CDD" id="cd06977">
    <property type="entry name" value="cupin_RhaR_RhaS-like_N"/>
    <property type="match status" value="1"/>
</dbReference>
<dbReference type="FunFam" id="1.10.10.60:FF:000181">
    <property type="entry name" value="HTH-type transcriptional activator RhaS"/>
    <property type="match status" value="1"/>
</dbReference>
<dbReference type="FunFam" id="2.60.120.10:FF:000041">
    <property type="entry name" value="HTH-type transcriptional activator RhaS"/>
    <property type="match status" value="1"/>
</dbReference>
<dbReference type="Gene3D" id="1.10.10.60">
    <property type="entry name" value="Homeodomain-like"/>
    <property type="match status" value="1"/>
</dbReference>
<dbReference type="Gene3D" id="2.60.120.10">
    <property type="entry name" value="Jelly Rolls"/>
    <property type="match status" value="1"/>
</dbReference>
<dbReference type="HAMAP" id="MF_01534">
    <property type="entry name" value="HTH_type_RhaS"/>
    <property type="match status" value="1"/>
</dbReference>
<dbReference type="InterPro" id="IPR003313">
    <property type="entry name" value="AraC-bd"/>
</dbReference>
<dbReference type="InterPro" id="IPR050204">
    <property type="entry name" value="AraC_XylS_family_regulators"/>
</dbReference>
<dbReference type="InterPro" id="IPR009057">
    <property type="entry name" value="Homeodomain-like_sf"/>
</dbReference>
<dbReference type="InterPro" id="IPR037923">
    <property type="entry name" value="HTH-like"/>
</dbReference>
<dbReference type="InterPro" id="IPR018060">
    <property type="entry name" value="HTH_AraC"/>
</dbReference>
<dbReference type="InterPro" id="IPR018062">
    <property type="entry name" value="HTH_AraC-typ_CS"/>
</dbReference>
<dbReference type="InterPro" id="IPR047220">
    <property type="entry name" value="RhaR_RhaS-like_N"/>
</dbReference>
<dbReference type="InterPro" id="IPR014710">
    <property type="entry name" value="RmlC-like_jellyroll"/>
</dbReference>
<dbReference type="InterPro" id="IPR020449">
    <property type="entry name" value="Tscrpt_reg_AraC-type_HTH"/>
</dbReference>
<dbReference type="InterPro" id="IPR023609">
    <property type="entry name" value="Tscrpt_reg_HTH_RhaS"/>
</dbReference>
<dbReference type="NCBIfam" id="NF010028">
    <property type="entry name" value="PRK13503.1"/>
    <property type="match status" value="1"/>
</dbReference>
<dbReference type="PANTHER" id="PTHR46796:SF13">
    <property type="entry name" value="HTH-TYPE TRANSCRIPTIONAL ACTIVATOR RHAS"/>
    <property type="match status" value="1"/>
</dbReference>
<dbReference type="PANTHER" id="PTHR46796">
    <property type="entry name" value="HTH-TYPE TRANSCRIPTIONAL ACTIVATOR RHAS-RELATED"/>
    <property type="match status" value="1"/>
</dbReference>
<dbReference type="Pfam" id="PF02311">
    <property type="entry name" value="AraC_binding"/>
    <property type="match status" value="1"/>
</dbReference>
<dbReference type="Pfam" id="PF12833">
    <property type="entry name" value="HTH_18"/>
    <property type="match status" value="1"/>
</dbReference>
<dbReference type="PRINTS" id="PR00032">
    <property type="entry name" value="HTHARAC"/>
</dbReference>
<dbReference type="SMART" id="SM00342">
    <property type="entry name" value="HTH_ARAC"/>
    <property type="match status" value="1"/>
</dbReference>
<dbReference type="SUPFAM" id="SSF46689">
    <property type="entry name" value="Homeodomain-like"/>
    <property type="match status" value="2"/>
</dbReference>
<dbReference type="SUPFAM" id="SSF51215">
    <property type="entry name" value="Regulatory protein AraC"/>
    <property type="match status" value="1"/>
</dbReference>
<dbReference type="PROSITE" id="PS00041">
    <property type="entry name" value="HTH_ARAC_FAMILY_1"/>
    <property type="match status" value="1"/>
</dbReference>
<dbReference type="PROSITE" id="PS01124">
    <property type="entry name" value="HTH_ARAC_FAMILY_2"/>
    <property type="match status" value="1"/>
</dbReference>
<evidence type="ECO:0000255" key="1">
    <source>
        <dbReference type="HAMAP-Rule" id="MF_01534"/>
    </source>
</evidence>
<proteinExistence type="inferred from homology"/>
<gene>
    <name evidence="1" type="primary">rhaS</name>
    <name type="ordered locus">SBO_3923</name>
</gene>
<sequence>MTVLHSVDFFPSGNASVAIEPRLPQADFPEHHHDFHEIVIVEHGTGIHVFNGQPYTITGGTVCFVRDHDRHLYEHTDNLCLTNVLYRSPDRFQFLAGLNQLLPQELDGQYPSHWRVNHSVLQQVRQLVAQMEQQEGENDLPSTASREILFMQLLLLLRKSSLQENLENSASRLNLLLAWLEDHFADEVNWDAVADQFSLSLRTLHRQLKQQTGLTPQRYLNRLRLMKARHLLRHSEASVTDIAYRCGFSDSNHFSTLFRREFNWSPRDIRQGRDGFLQ</sequence>
<keyword id="KW-0010">Activator</keyword>
<keyword id="KW-0963">Cytoplasm</keyword>
<keyword id="KW-0238">DNA-binding</keyword>
<keyword id="KW-0677">Repeat</keyword>
<keyword id="KW-0684">Rhamnose metabolism</keyword>
<keyword id="KW-0804">Transcription</keyword>
<keyword id="KW-0805">Transcription regulation</keyword>
<accession>Q31U84</accession>
<protein>
    <recommendedName>
        <fullName evidence="1">HTH-type transcriptional activator RhaS</fullName>
    </recommendedName>
    <alternativeName>
        <fullName evidence="1">L-rhamnose operon regulatory protein RhaS</fullName>
    </alternativeName>
</protein>
<reference key="1">
    <citation type="journal article" date="2005" name="Nucleic Acids Res.">
        <title>Genome dynamics and diversity of Shigella species, the etiologic agents of bacillary dysentery.</title>
        <authorList>
            <person name="Yang F."/>
            <person name="Yang J."/>
            <person name="Zhang X."/>
            <person name="Chen L."/>
            <person name="Jiang Y."/>
            <person name="Yan Y."/>
            <person name="Tang X."/>
            <person name="Wang J."/>
            <person name="Xiong Z."/>
            <person name="Dong J."/>
            <person name="Xue Y."/>
            <person name="Zhu Y."/>
            <person name="Xu X."/>
            <person name="Sun L."/>
            <person name="Chen S."/>
            <person name="Nie H."/>
            <person name="Peng J."/>
            <person name="Xu J."/>
            <person name="Wang Y."/>
            <person name="Yuan Z."/>
            <person name="Wen Y."/>
            <person name="Yao Z."/>
            <person name="Shen Y."/>
            <person name="Qiang B."/>
            <person name="Hou Y."/>
            <person name="Yu J."/>
            <person name="Jin Q."/>
        </authorList>
    </citation>
    <scope>NUCLEOTIDE SEQUENCE [LARGE SCALE GENOMIC DNA]</scope>
    <source>
        <strain>Sb227</strain>
    </source>
</reference>
<comment type="function">
    <text evidence="1">Activates expression of the rhaBAD and rhaT operons.</text>
</comment>
<comment type="subunit">
    <text evidence="1">Binds DNA as a dimer.</text>
</comment>
<comment type="subcellular location">
    <subcellularLocation>
        <location evidence="1">Cytoplasm</location>
    </subcellularLocation>
</comment>